<dbReference type="EC" id="5.1.1.17"/>
<dbReference type="EMBL" id="M32324">
    <property type="protein sequence ID" value="AAA26714.1"/>
    <property type="molecule type" value="Genomic_DNA"/>
</dbReference>
<dbReference type="PIR" id="T52311">
    <property type="entry name" value="T52311"/>
</dbReference>
<dbReference type="RefSeq" id="WP_003952494.1">
    <property type="nucleotide sequence ID" value="NZ_CM000913.1"/>
</dbReference>
<dbReference type="SMR" id="P18549"/>
<dbReference type="STRING" id="1901.BB341_07745"/>
<dbReference type="GeneID" id="93729312"/>
<dbReference type="KEGG" id="ag:AAA26714"/>
<dbReference type="eggNOG" id="COG0520">
    <property type="taxonomic scope" value="Bacteria"/>
</dbReference>
<dbReference type="OrthoDB" id="250246at2"/>
<dbReference type="BioCyc" id="MetaCyc:MONOMER-13381"/>
<dbReference type="UniPathway" id="UPA00172"/>
<dbReference type="GO" id="GO:0045439">
    <property type="term" value="F:isopenicillin-N epimerase activity"/>
    <property type="evidence" value="ECO:0007669"/>
    <property type="project" value="UniProtKB-EC"/>
</dbReference>
<dbReference type="GO" id="GO:0017000">
    <property type="term" value="P:antibiotic biosynthetic process"/>
    <property type="evidence" value="ECO:0007669"/>
    <property type="project" value="UniProtKB-KW"/>
</dbReference>
<dbReference type="Gene3D" id="3.90.1150.10">
    <property type="entry name" value="Aspartate Aminotransferase, domain 1"/>
    <property type="match status" value="1"/>
</dbReference>
<dbReference type="Gene3D" id="3.40.640.10">
    <property type="entry name" value="Type I PLP-dependent aspartate aminotransferase-like (Major domain)"/>
    <property type="match status" value="1"/>
</dbReference>
<dbReference type="InterPro" id="IPR000192">
    <property type="entry name" value="Aminotrans_V_dom"/>
</dbReference>
<dbReference type="InterPro" id="IPR020578">
    <property type="entry name" value="Aminotrans_V_PyrdxlP_BS"/>
</dbReference>
<dbReference type="InterPro" id="IPR015424">
    <property type="entry name" value="PyrdxlP-dep_Trfase"/>
</dbReference>
<dbReference type="InterPro" id="IPR015421">
    <property type="entry name" value="PyrdxlP-dep_Trfase_major"/>
</dbReference>
<dbReference type="InterPro" id="IPR015422">
    <property type="entry name" value="PyrdxlP-dep_Trfase_small"/>
</dbReference>
<dbReference type="PANTHER" id="PTHR43092:SF6">
    <property type="entry name" value="BLR1280 PROTEIN"/>
    <property type="match status" value="1"/>
</dbReference>
<dbReference type="PANTHER" id="PTHR43092">
    <property type="entry name" value="L-CYSTEINE DESULFHYDRASE"/>
    <property type="match status" value="1"/>
</dbReference>
<dbReference type="Pfam" id="PF00266">
    <property type="entry name" value="Aminotran_5"/>
    <property type="match status" value="1"/>
</dbReference>
<dbReference type="SUPFAM" id="SSF53383">
    <property type="entry name" value="PLP-dependent transferases"/>
    <property type="match status" value="1"/>
</dbReference>
<dbReference type="PROSITE" id="PS00595">
    <property type="entry name" value="AA_TRANSFER_CLASS_5"/>
    <property type="match status" value="1"/>
</dbReference>
<feature type="initiator methionine" description="Removed" evidence="2">
    <location>
        <position position="1"/>
    </location>
</feature>
<feature type="chain" id="PRO_0000150241" description="Isopenicillin N epimerase">
    <location>
        <begin position="2"/>
        <end position="398"/>
    </location>
</feature>
<feature type="modified residue" description="N6-(pyridoxal phosphate)lysine" evidence="1">
    <location>
        <position position="217"/>
    </location>
</feature>
<comment type="function">
    <text>Catalyzes the reversible isomerization between isopenicillin N and penicillin N.</text>
</comment>
<comment type="catalytic activity">
    <reaction>
        <text>isopenicillin N = penicillin N</text>
        <dbReference type="Rhea" id="RHEA:20033"/>
        <dbReference type="ChEBI" id="CHEBI:58399"/>
        <dbReference type="ChEBI" id="CHEBI:58408"/>
        <dbReference type="EC" id="5.1.1.17"/>
    </reaction>
</comment>
<comment type="cofactor">
    <cofactor>
        <name>pyridoxal 5'-phosphate</name>
        <dbReference type="ChEBI" id="CHEBI:597326"/>
    </cofactor>
</comment>
<comment type="pathway">
    <text>Antibiotic biosynthesis; cephalosporin C biosynthesis.</text>
</comment>
<comment type="similarity">
    <text evidence="3">Belongs to the class-V pyridoxal-phosphate-dependent aminotransferase family.</text>
</comment>
<name>CEFD_STRCL</name>
<organism>
    <name type="scientific">Streptomyces clavuligerus</name>
    <dbReference type="NCBI Taxonomy" id="1901"/>
    <lineage>
        <taxon>Bacteria</taxon>
        <taxon>Bacillati</taxon>
        <taxon>Actinomycetota</taxon>
        <taxon>Actinomycetes</taxon>
        <taxon>Kitasatosporales</taxon>
        <taxon>Streptomycetaceae</taxon>
        <taxon>Streptomyces</taxon>
    </lineage>
</organism>
<reference key="1">
    <citation type="journal article" date="1990" name="J. Bacteriol.">
        <title>The beta-lactam biosynthesis genes for isopenicillin N epimerase and deacetoxycephalosporin C synthetase are expressed from a single transcript in Streptomyces clavuligerus.</title>
        <authorList>
            <person name="Kovacevic S."/>
            <person name="Tobin M.B."/>
            <person name="Miller J.R."/>
        </authorList>
    </citation>
    <scope>NUCLEOTIDE SEQUENCE [GENOMIC DNA]</scope>
    <source>
        <strain>ATCC 27064 / DSM 738 / JCM 4710 / NBRC 13307 / NCIMB 12785 / NRRL 3585 / VKM Ac-602</strain>
    </source>
</reference>
<reference key="2">
    <citation type="journal article" date="1989" name="Biochim. Biophys. Acta">
        <title>Purification and properties of isopenicillin N epimerase from Streptomyces clavuligerus.</title>
        <authorList>
            <person name="Usui S."/>
            <person name="Yu C.-A."/>
        </authorList>
    </citation>
    <scope>PROTEIN SEQUENCE OF 2-24</scope>
</reference>
<proteinExistence type="evidence at protein level"/>
<accession>P18549</accession>
<protein>
    <recommendedName>
        <fullName>Isopenicillin N epimerase</fullName>
        <ecNumber>5.1.1.17</ecNumber>
    </recommendedName>
</protein>
<gene>
    <name type="primary">cefD</name>
</gene>
<evidence type="ECO:0000250" key="1"/>
<evidence type="ECO:0000269" key="2">
    <source>
    </source>
</evidence>
<evidence type="ECO:0000305" key="3"/>
<sequence>MAVADWEEARGRMLLDPTVVNLNTGSGGPLPRSAFERVTGFRAHLAAEPMDFLLREVPALLWQARESLARLIGGDPLRLALATNVTAAVNLVASSLRLEAPGEILLSDDEYTPMRWCWERVARRHGLELRTFRLPELPSDPAEITAAAVAAMGPRTRLFFFSHVVSTTGLILPAAELCEEARARGITTVVDGAHAPGFLDLDLSRIPCDFYAGSGHKWLLAPTGVGFLHLAPGRLEELEPTQVSWAYEPPEGSGPPAARDRFGSTPGLRRLECEGTRDICPWLATPESIDFQAELGPGAIRARRRELTDHARRLLADRPGRTLLTPDSPELSGGMVAYRLPPGTDAAELRRGLWERFRIEAAVAEQPPGPVLRISANFYTTEEEIDRLADALDALTGE</sequence>
<keyword id="KW-0045">Antibiotic biosynthesis</keyword>
<keyword id="KW-0903">Direct protein sequencing</keyword>
<keyword id="KW-0413">Isomerase</keyword>
<keyword id="KW-0663">Pyridoxal phosphate</keyword>